<name>FER1_RHORU</name>
<evidence type="ECO:0000250" key="1"/>
<evidence type="ECO:0000255" key="2">
    <source>
        <dbReference type="PROSITE-ProRule" id="PRU00711"/>
    </source>
</evidence>
<reference key="1">
    <citation type="journal article" date="1983" name="J. Biochem.">
        <title>Structure of the extracellular ferredoxin from Rhodospirillum rubrum: close similarity to clostridial ferredoxins.</title>
        <authorList>
            <person name="Matsubara H."/>
            <person name="Inoue K."/>
            <person name="Hase T."/>
            <person name="Hiura H."/>
            <person name="Kakuno T."/>
            <person name="Yamashita J."/>
            <person name="Horio T."/>
        </authorList>
    </citation>
    <scope>PROTEIN SEQUENCE</scope>
</reference>
<sequence>AYKIEETCISCGACAAECPVNAIEQGDTIFVVNADTCIDCGNCANVCPVGAPVAE</sequence>
<keyword id="KW-0004">4Fe-4S</keyword>
<keyword id="KW-0903">Direct protein sequencing</keyword>
<keyword id="KW-0249">Electron transport</keyword>
<keyword id="KW-0408">Iron</keyword>
<keyword id="KW-0411">Iron-sulfur</keyword>
<keyword id="KW-0479">Metal-binding</keyword>
<keyword id="KW-0677">Repeat</keyword>
<keyword id="KW-0813">Transport</keyword>
<comment type="function">
    <text>Ferredoxins are iron-sulfur proteins that transfer electrons in a wide variety of metabolic reactions.</text>
</comment>
<comment type="cofactor">
    <cofactor>
        <name>[4Fe-4S] cluster</name>
        <dbReference type="ChEBI" id="CHEBI:49883"/>
    </cofactor>
    <text>Binds 2 [4Fe-4S] clusters.</text>
</comment>
<accession>P00194</accession>
<proteinExistence type="evidence at protein level"/>
<feature type="chain" id="PRO_0000159119" description="Ferredoxin-1">
    <location>
        <begin position="1"/>
        <end position="55"/>
    </location>
</feature>
<feature type="domain" description="4Fe-4S ferredoxin-type 1" evidence="2">
    <location>
        <begin position="2"/>
        <end position="27"/>
    </location>
</feature>
<feature type="domain" description="4Fe-4S ferredoxin-type 2" evidence="2">
    <location>
        <begin position="28"/>
        <end position="55"/>
    </location>
</feature>
<feature type="binding site" evidence="1">
    <location>
        <position position="8"/>
    </location>
    <ligand>
        <name>[4Fe-4S] cluster</name>
        <dbReference type="ChEBI" id="CHEBI:49883"/>
        <label>1</label>
    </ligand>
</feature>
<feature type="binding site" evidence="1">
    <location>
        <position position="11"/>
    </location>
    <ligand>
        <name>[4Fe-4S] cluster</name>
        <dbReference type="ChEBI" id="CHEBI:49883"/>
        <label>1</label>
    </ligand>
</feature>
<feature type="binding site" evidence="1">
    <location>
        <position position="14"/>
    </location>
    <ligand>
        <name>[4Fe-4S] cluster</name>
        <dbReference type="ChEBI" id="CHEBI:49883"/>
        <label>1</label>
    </ligand>
</feature>
<feature type="binding site" evidence="1">
    <location>
        <position position="18"/>
    </location>
    <ligand>
        <name>[4Fe-4S] cluster</name>
        <dbReference type="ChEBI" id="CHEBI:49883"/>
        <label>2</label>
    </ligand>
</feature>
<feature type="binding site" evidence="1">
    <location>
        <position position="37"/>
    </location>
    <ligand>
        <name>[4Fe-4S] cluster</name>
        <dbReference type="ChEBI" id="CHEBI:49883"/>
        <label>2</label>
    </ligand>
</feature>
<feature type="binding site" evidence="1">
    <location>
        <position position="40"/>
    </location>
    <ligand>
        <name>[4Fe-4S] cluster</name>
        <dbReference type="ChEBI" id="CHEBI:49883"/>
        <label>2</label>
    </ligand>
</feature>
<feature type="binding site" evidence="1">
    <location>
        <position position="43"/>
    </location>
    <ligand>
        <name>[4Fe-4S] cluster</name>
        <dbReference type="ChEBI" id="CHEBI:49883"/>
        <label>2</label>
    </ligand>
</feature>
<feature type="binding site" evidence="1">
    <location>
        <position position="47"/>
    </location>
    <ligand>
        <name>[4Fe-4S] cluster</name>
        <dbReference type="ChEBI" id="CHEBI:49883"/>
        <label>1</label>
    </ligand>
</feature>
<dbReference type="PIR" id="A00197">
    <property type="entry name" value="FEQFR"/>
</dbReference>
<dbReference type="SMR" id="P00194"/>
<dbReference type="GO" id="GO:0051539">
    <property type="term" value="F:4 iron, 4 sulfur cluster binding"/>
    <property type="evidence" value="ECO:0007669"/>
    <property type="project" value="UniProtKB-KW"/>
</dbReference>
<dbReference type="GO" id="GO:0009055">
    <property type="term" value="F:electron transfer activity"/>
    <property type="evidence" value="ECO:0000314"/>
    <property type="project" value="CACAO"/>
</dbReference>
<dbReference type="GO" id="GO:0046872">
    <property type="term" value="F:metal ion binding"/>
    <property type="evidence" value="ECO:0007669"/>
    <property type="project" value="UniProtKB-KW"/>
</dbReference>
<dbReference type="FunFam" id="3.30.70.20:FF:000045">
    <property type="entry name" value="Ferredoxin, 4Fe-4S"/>
    <property type="match status" value="1"/>
</dbReference>
<dbReference type="Gene3D" id="3.30.70.20">
    <property type="match status" value="1"/>
</dbReference>
<dbReference type="InterPro" id="IPR017896">
    <property type="entry name" value="4Fe4S_Fe-S-bd"/>
</dbReference>
<dbReference type="InterPro" id="IPR017900">
    <property type="entry name" value="4Fe4S_Fe_S_CS"/>
</dbReference>
<dbReference type="InterPro" id="IPR000813">
    <property type="entry name" value="7Fe_ferredoxin"/>
</dbReference>
<dbReference type="InterPro" id="IPR050157">
    <property type="entry name" value="PSI_iron-sulfur_center"/>
</dbReference>
<dbReference type="PANTHER" id="PTHR24960:SF79">
    <property type="entry name" value="PHOTOSYSTEM I IRON-SULFUR CENTER"/>
    <property type="match status" value="1"/>
</dbReference>
<dbReference type="PANTHER" id="PTHR24960">
    <property type="entry name" value="PHOTOSYSTEM I IRON-SULFUR CENTER-RELATED"/>
    <property type="match status" value="1"/>
</dbReference>
<dbReference type="Pfam" id="PF12838">
    <property type="entry name" value="Fer4_7"/>
    <property type="match status" value="1"/>
</dbReference>
<dbReference type="PRINTS" id="PR00354">
    <property type="entry name" value="7FE8SFRDOXIN"/>
</dbReference>
<dbReference type="SUPFAM" id="SSF54862">
    <property type="entry name" value="4Fe-4S ferredoxins"/>
    <property type="match status" value="1"/>
</dbReference>
<dbReference type="PROSITE" id="PS00198">
    <property type="entry name" value="4FE4S_FER_1"/>
    <property type="match status" value="2"/>
</dbReference>
<dbReference type="PROSITE" id="PS51379">
    <property type="entry name" value="4FE4S_FER_2"/>
    <property type="match status" value="2"/>
</dbReference>
<protein>
    <recommendedName>
        <fullName>Ferredoxin-1</fullName>
    </recommendedName>
    <alternativeName>
        <fullName>Ferredoxin I</fullName>
        <shortName>FdI</shortName>
    </alternativeName>
</protein>
<organism>
    <name type="scientific">Rhodospirillum rubrum</name>
    <dbReference type="NCBI Taxonomy" id="1085"/>
    <lineage>
        <taxon>Bacteria</taxon>
        <taxon>Pseudomonadati</taxon>
        <taxon>Pseudomonadota</taxon>
        <taxon>Alphaproteobacteria</taxon>
        <taxon>Rhodospirillales</taxon>
        <taxon>Rhodospirillaceae</taxon>
        <taxon>Rhodospirillum</taxon>
    </lineage>
</organism>